<keyword id="KW-0965">Cell junction</keyword>
<keyword id="KW-1003">Cell membrane</keyword>
<keyword id="KW-0303">Gap junction</keyword>
<keyword id="KW-0407">Ion channel</keyword>
<keyword id="KW-0406">Ion transport</keyword>
<keyword id="KW-0472">Membrane</keyword>
<keyword id="KW-1185">Reference proteome</keyword>
<keyword id="KW-0812">Transmembrane</keyword>
<keyword id="KW-1133">Transmembrane helix</keyword>
<keyword id="KW-0813">Transport</keyword>
<reference key="1">
    <citation type="journal article" date="1996" name="J. Cell Biol.">
        <title>eat-5 and unc-7 represent a multigene family in Caenorhabditis elegans involved in cell-cell coupling.</title>
        <authorList>
            <person name="Starich T.A."/>
            <person name="Lee R.Y."/>
            <person name="Panzarella C."/>
            <person name="Avery L."/>
            <person name="Shaw J.E."/>
        </authorList>
    </citation>
    <scope>NUCLEOTIDE SEQUENCE [MRNA]</scope>
    <scope>FUNCTION</scope>
</reference>
<reference key="2">
    <citation type="journal article" date="1998" name="Science">
        <title>Genome sequence of the nematode C. elegans: a platform for investigating biology.</title>
        <authorList>
            <consortium name="The C. elegans sequencing consortium"/>
        </authorList>
    </citation>
    <scope>NUCLEOTIDE SEQUENCE [LARGE SCALE GENOMIC DNA]</scope>
    <source>
        <strain>Bristol N2</strain>
    </source>
</reference>
<organism>
    <name type="scientific">Caenorhabditis elegans</name>
    <dbReference type="NCBI Taxonomy" id="6239"/>
    <lineage>
        <taxon>Eukaryota</taxon>
        <taxon>Metazoa</taxon>
        <taxon>Ecdysozoa</taxon>
        <taxon>Nematoda</taxon>
        <taxon>Chromadorea</taxon>
        <taxon>Rhabditida</taxon>
        <taxon>Rhabditina</taxon>
        <taxon>Rhabditomorpha</taxon>
        <taxon>Rhabditoidea</taxon>
        <taxon>Rhabditidae</taxon>
        <taxon>Peloderinae</taxon>
        <taxon>Caenorhabditis</taxon>
    </lineage>
</organism>
<dbReference type="EMBL" id="U59210">
    <property type="protein sequence ID" value="AAB09669.1"/>
    <property type="molecule type" value="mRNA"/>
</dbReference>
<dbReference type="EMBL" id="Z71259">
    <property type="protein sequence ID" value="CAA95793.1"/>
    <property type="molecule type" value="Genomic_DNA"/>
</dbReference>
<dbReference type="PIR" id="T20857">
    <property type="entry name" value="T20857"/>
</dbReference>
<dbReference type="RefSeq" id="NP_492068.1">
    <property type="nucleotide sequence ID" value="NM_059667.8"/>
</dbReference>
<dbReference type="SMR" id="Q27295"/>
<dbReference type="FunCoup" id="Q27295">
    <property type="interactions" value="178"/>
</dbReference>
<dbReference type="STRING" id="6239.F13G3.8.2"/>
<dbReference type="PaxDb" id="6239-F13G3.8.2"/>
<dbReference type="PeptideAtlas" id="Q27295"/>
<dbReference type="EnsemblMetazoa" id="F13G3.8.1">
    <property type="protein sequence ID" value="F13G3.8.1"/>
    <property type="gene ID" value="WBGene00001136"/>
</dbReference>
<dbReference type="GeneID" id="172480"/>
<dbReference type="KEGG" id="cel:CELE_F13G3.8"/>
<dbReference type="UCSC" id="F13G3.8.1">
    <property type="organism name" value="c. elegans"/>
</dbReference>
<dbReference type="AGR" id="WB:WBGene00001136"/>
<dbReference type="CTD" id="172480"/>
<dbReference type="WormBase" id="F13G3.8">
    <property type="protein sequence ID" value="CE05620"/>
    <property type="gene ID" value="WBGene00001136"/>
    <property type="gene designation" value="eat-5"/>
</dbReference>
<dbReference type="eggNOG" id="ENOG502SID2">
    <property type="taxonomic scope" value="Eukaryota"/>
</dbReference>
<dbReference type="HOGENOM" id="CLU_035763_0_2_1"/>
<dbReference type="InParanoid" id="Q27295"/>
<dbReference type="OMA" id="CFVYNTY"/>
<dbReference type="OrthoDB" id="5867527at2759"/>
<dbReference type="PhylomeDB" id="Q27295"/>
<dbReference type="PRO" id="PR:Q27295"/>
<dbReference type="Proteomes" id="UP000001940">
    <property type="component" value="Chromosome I"/>
</dbReference>
<dbReference type="Bgee" id="WBGene00001136">
    <property type="expression patterns" value="Expressed in pharyngeal muscle cell (C elegans) and 3 other cell types or tissues"/>
</dbReference>
<dbReference type="GO" id="GO:0005921">
    <property type="term" value="C:gap junction"/>
    <property type="evidence" value="ECO:0000250"/>
    <property type="project" value="UniProtKB"/>
</dbReference>
<dbReference type="GO" id="GO:0005886">
    <property type="term" value="C:plasma membrane"/>
    <property type="evidence" value="ECO:0000250"/>
    <property type="project" value="UniProtKB"/>
</dbReference>
<dbReference type="GO" id="GO:0005243">
    <property type="term" value="F:gap junction channel activity"/>
    <property type="evidence" value="ECO:0000250"/>
    <property type="project" value="UniProtKB"/>
</dbReference>
<dbReference type="GO" id="GO:0055077">
    <property type="term" value="F:gap junction hemi-channel activity"/>
    <property type="evidence" value="ECO:0000250"/>
    <property type="project" value="UniProtKB"/>
</dbReference>
<dbReference type="GO" id="GO:0034220">
    <property type="term" value="P:monoatomic ion transmembrane transport"/>
    <property type="evidence" value="ECO:0007669"/>
    <property type="project" value="UniProtKB-KW"/>
</dbReference>
<dbReference type="InterPro" id="IPR000990">
    <property type="entry name" value="Innexin"/>
</dbReference>
<dbReference type="PANTHER" id="PTHR11893">
    <property type="entry name" value="INNEXIN"/>
    <property type="match status" value="1"/>
</dbReference>
<dbReference type="PANTHER" id="PTHR11893:SF21">
    <property type="entry name" value="INNEXIN EAT-5"/>
    <property type="match status" value="1"/>
</dbReference>
<dbReference type="Pfam" id="PF00876">
    <property type="entry name" value="Innexin"/>
    <property type="match status" value="1"/>
</dbReference>
<dbReference type="PRINTS" id="PR01262">
    <property type="entry name" value="INNEXIN"/>
</dbReference>
<dbReference type="PROSITE" id="PS51013">
    <property type="entry name" value="PANNEXIN"/>
    <property type="match status" value="1"/>
</dbReference>
<feature type="chain" id="PRO_0000208504" description="Innexin eat-5">
    <location>
        <begin position="1"/>
        <end position="423"/>
    </location>
</feature>
<feature type="transmembrane region" description="Helical" evidence="2">
    <location>
        <begin position="25"/>
        <end position="41"/>
    </location>
</feature>
<feature type="transmembrane region" description="Helical" evidence="2">
    <location>
        <begin position="102"/>
        <end position="122"/>
    </location>
</feature>
<feature type="transmembrane region" description="Helical" evidence="2">
    <location>
        <begin position="277"/>
        <end position="297"/>
    </location>
</feature>
<feature type="transmembrane region" description="Helical" evidence="2">
    <location>
        <begin position="341"/>
        <end position="361"/>
    </location>
</feature>
<name>EAT5_CAEEL</name>
<sequence>MNMLGSMFSMVKPRLDDLGTDRLNYYYSTLIIMGMSLTITARQYVGSPLQCWVPAQFTKAWEQYAEDYCFVYNTYWVKPNDKVPLTVEERVSQQLIYYQWAPFIMAIEAAFFYLPVIFWSMLSTKSGINIIKLVETAQKAEGAESEERKKQIDIICRHISNNLRKRRNEEETTKMAKIQRIFGMQHGKYITNVYLVTKLIYMTNSFLQFYSTNKFLGQNDPYWGMRILDDILKGTDWEHSGNFPRIAMCDFQVRVLGNLQRYSIQCVLTLNMFNEKIFLFLYIWFLLVFFVTLFDSIFLCYNMFSSHKLVEFLQQFLDNQDQDENDEKKPEERKVYRKEQHSILLSEFCLHKFTPDIIILLKMINNHTGDIVCTEIVGRMWNEFLERDAKLVLQRFVDNDHHMETKSSSLKSEKLFEEQRSFI</sequence>
<accession>Q27295</accession>
<proteinExistence type="evidence at transcript level"/>
<protein>
    <recommendedName>
        <fullName>Innexin eat-5</fullName>
    </recommendedName>
    <alternativeName>
        <fullName>Abnormal pharyngeal pumping eat-5</fullName>
    </alternativeName>
</protein>
<comment type="function">
    <text evidence="1 3">Structural component of the gap junctions (By similarity). Required for synchronized pharyngeal muscle contractions.</text>
</comment>
<comment type="subunit">
    <text>Heterooligomer of eat-5 and another innexin.</text>
</comment>
<comment type="subcellular location">
    <subcellularLocation>
        <location evidence="4">Cell membrane</location>
        <topology evidence="2">Multi-pass membrane protein</topology>
    </subcellularLocation>
    <subcellularLocation>
        <location>Cell junction</location>
        <location>Gap junction</location>
    </subcellularLocation>
</comment>
<comment type="tissue specificity">
    <text>Expressed in pharyngeal muscles.</text>
</comment>
<comment type="similarity">
    <text evidence="2">Belongs to the pannexin family.</text>
</comment>
<gene>
    <name type="primary">eat-5</name>
    <name type="ORF">F13G3.8</name>
</gene>
<evidence type="ECO:0000250" key="1">
    <source>
        <dbReference type="UniProtKB" id="O61715"/>
    </source>
</evidence>
<evidence type="ECO:0000255" key="2">
    <source>
        <dbReference type="PROSITE-ProRule" id="PRU00351"/>
    </source>
</evidence>
<evidence type="ECO:0000269" key="3">
    <source>
    </source>
</evidence>
<evidence type="ECO:0000305" key="4"/>